<accession>Q05924</accession>
<accession>D6VYZ8</accession>
<dbReference type="EC" id="3.1.-.-"/>
<dbReference type="EMBL" id="U19103">
    <property type="protein sequence ID" value="AAB67574.1"/>
    <property type="molecule type" value="Genomic_DNA"/>
</dbReference>
<dbReference type="EMBL" id="BK006945">
    <property type="protein sequence ID" value="DAA09664.1"/>
    <property type="molecule type" value="Genomic_DNA"/>
</dbReference>
<dbReference type="PIR" id="S51379">
    <property type="entry name" value="S51379"/>
</dbReference>
<dbReference type="RefSeq" id="NP_013465.1">
    <property type="nucleotide sequence ID" value="NM_001182250.1"/>
</dbReference>
<dbReference type="BioGRID" id="31622">
    <property type="interactions" value="154"/>
</dbReference>
<dbReference type="FunCoup" id="Q05924">
    <property type="interactions" value="110"/>
</dbReference>
<dbReference type="IntAct" id="Q05924">
    <property type="interactions" value="1"/>
</dbReference>
<dbReference type="MINT" id="Q05924"/>
<dbReference type="STRING" id="4932.YLR361C"/>
<dbReference type="PaxDb" id="4932-YLR361C"/>
<dbReference type="PeptideAtlas" id="Q05924"/>
<dbReference type="EnsemblFungi" id="YLR361C_mRNA">
    <property type="protein sequence ID" value="YLR361C"/>
    <property type="gene ID" value="YLR361C"/>
</dbReference>
<dbReference type="GeneID" id="851075"/>
<dbReference type="KEGG" id="sce:YLR361C"/>
<dbReference type="AGR" id="SGD:S000004353"/>
<dbReference type="SGD" id="S000004353">
    <property type="gene designation" value="DCR2"/>
</dbReference>
<dbReference type="VEuPathDB" id="FungiDB:YLR361C"/>
<dbReference type="eggNOG" id="KOG1432">
    <property type="taxonomic scope" value="Eukaryota"/>
</dbReference>
<dbReference type="GeneTree" id="ENSGT00940000176373"/>
<dbReference type="HOGENOM" id="CLU_019692_4_2_1"/>
<dbReference type="InParanoid" id="Q05924"/>
<dbReference type="OMA" id="NIGYHEC"/>
<dbReference type="OrthoDB" id="783096at2759"/>
<dbReference type="BioCyc" id="YEAST:G3O-32432-MONOMER"/>
<dbReference type="BioGRID-ORCS" id="851075">
    <property type="hits" value="0 hits in 10 CRISPR screens"/>
</dbReference>
<dbReference type="PRO" id="PR:Q05924"/>
<dbReference type="Proteomes" id="UP000002311">
    <property type="component" value="Chromosome XII"/>
</dbReference>
<dbReference type="RNAct" id="Q05924">
    <property type="molecule type" value="protein"/>
</dbReference>
<dbReference type="GO" id="GO:0000324">
    <property type="term" value="C:fungal-type vacuole"/>
    <property type="evidence" value="ECO:0007005"/>
    <property type="project" value="SGD"/>
</dbReference>
<dbReference type="GO" id="GO:0005524">
    <property type="term" value="F:ATP binding"/>
    <property type="evidence" value="ECO:0007669"/>
    <property type="project" value="UniProtKB-KW"/>
</dbReference>
<dbReference type="GO" id="GO:0016788">
    <property type="term" value="F:hydrolase activity, acting on ester bonds"/>
    <property type="evidence" value="ECO:0000315"/>
    <property type="project" value="SGD"/>
</dbReference>
<dbReference type="GO" id="GO:0004721">
    <property type="term" value="F:phosphoprotein phosphatase activity"/>
    <property type="evidence" value="ECO:0000314"/>
    <property type="project" value="SGD"/>
</dbReference>
<dbReference type="GO" id="GO:1900102">
    <property type="term" value="P:negative regulation of endoplasmic reticulum unfolded protein response"/>
    <property type="evidence" value="ECO:0000315"/>
    <property type="project" value="SGD"/>
</dbReference>
<dbReference type="GO" id="GO:0007089">
    <property type="term" value="P:traversing start control point of mitotic cell cycle"/>
    <property type="evidence" value="ECO:0000315"/>
    <property type="project" value="SGD"/>
</dbReference>
<dbReference type="CDD" id="cd07383">
    <property type="entry name" value="MPP_Dcr2"/>
    <property type="match status" value="1"/>
</dbReference>
<dbReference type="FunFam" id="3.60.21.10:FF:000054">
    <property type="entry name" value="DCR2p Phosphoesterase"/>
    <property type="match status" value="1"/>
</dbReference>
<dbReference type="Gene3D" id="3.60.21.10">
    <property type="match status" value="1"/>
</dbReference>
<dbReference type="InterPro" id="IPR004843">
    <property type="entry name" value="Calcineurin-like_PHP_ApaH"/>
</dbReference>
<dbReference type="InterPro" id="IPR029052">
    <property type="entry name" value="Metallo-depent_PP-like"/>
</dbReference>
<dbReference type="PANTHER" id="PTHR32440:SF0">
    <property type="entry name" value="PHOSPHATASE DCR2-RELATED"/>
    <property type="match status" value="1"/>
</dbReference>
<dbReference type="PANTHER" id="PTHR32440">
    <property type="entry name" value="PHOSPHATASE DCR2-RELATED-RELATED"/>
    <property type="match status" value="1"/>
</dbReference>
<dbReference type="Pfam" id="PF00149">
    <property type="entry name" value="Metallophos"/>
    <property type="match status" value="1"/>
</dbReference>
<dbReference type="SUPFAM" id="SSF56300">
    <property type="entry name" value="Metallo-dependent phosphatases"/>
    <property type="match status" value="1"/>
</dbReference>
<name>DCR2_YEAST</name>
<evidence type="ECO:0000255" key="1"/>
<evidence type="ECO:0000269" key="2">
    <source>
    </source>
</evidence>
<evidence type="ECO:0000269" key="3">
    <source>
    </source>
</evidence>
<keyword id="KW-0067">ATP-binding</keyword>
<keyword id="KW-0131">Cell cycle</keyword>
<keyword id="KW-0963">Cytoplasm</keyword>
<keyword id="KW-0378">Hydrolase</keyword>
<keyword id="KW-0547">Nucleotide-binding</keyword>
<keyword id="KW-1185">Reference proteome</keyword>
<proteinExistence type="evidence at protein level"/>
<reference key="1">
    <citation type="journal article" date="1997" name="Nature">
        <title>The nucleotide sequence of Saccharomyces cerevisiae chromosome XII.</title>
        <authorList>
            <person name="Johnston M."/>
            <person name="Hillier L.W."/>
            <person name="Riles L."/>
            <person name="Albermann K."/>
            <person name="Andre B."/>
            <person name="Ansorge W."/>
            <person name="Benes V."/>
            <person name="Brueckner M."/>
            <person name="Delius H."/>
            <person name="Dubois E."/>
            <person name="Duesterhoeft A."/>
            <person name="Entian K.-D."/>
            <person name="Floeth M."/>
            <person name="Goffeau A."/>
            <person name="Hebling U."/>
            <person name="Heumann K."/>
            <person name="Heuss-Neitzel D."/>
            <person name="Hilbert H."/>
            <person name="Hilger F."/>
            <person name="Kleine K."/>
            <person name="Koetter P."/>
            <person name="Louis E.J."/>
            <person name="Messenguy F."/>
            <person name="Mewes H.-W."/>
            <person name="Miosga T."/>
            <person name="Moestl D."/>
            <person name="Mueller-Auer S."/>
            <person name="Nentwich U."/>
            <person name="Obermaier B."/>
            <person name="Piravandi E."/>
            <person name="Pohl T.M."/>
            <person name="Portetelle D."/>
            <person name="Purnelle B."/>
            <person name="Rechmann S."/>
            <person name="Rieger M."/>
            <person name="Rinke M."/>
            <person name="Rose M."/>
            <person name="Scharfe M."/>
            <person name="Scherens B."/>
            <person name="Scholler P."/>
            <person name="Schwager C."/>
            <person name="Schwarz S."/>
            <person name="Underwood A.P."/>
            <person name="Urrestarazu L.A."/>
            <person name="Vandenbol M."/>
            <person name="Verhasselt P."/>
            <person name="Vierendeels F."/>
            <person name="Voet M."/>
            <person name="Volckaert G."/>
            <person name="Voss H."/>
            <person name="Wambutt R."/>
            <person name="Wedler E."/>
            <person name="Wedler H."/>
            <person name="Zimmermann F.K."/>
            <person name="Zollner A."/>
            <person name="Hani J."/>
            <person name="Hoheisel J.D."/>
        </authorList>
    </citation>
    <scope>NUCLEOTIDE SEQUENCE [LARGE SCALE GENOMIC DNA]</scope>
    <source>
        <strain>ATCC 204508 / S288c</strain>
    </source>
</reference>
<reference key="2">
    <citation type="journal article" date="2014" name="G3 (Bethesda)">
        <title>The reference genome sequence of Saccharomyces cerevisiae: Then and now.</title>
        <authorList>
            <person name="Engel S.R."/>
            <person name="Dietrich F.S."/>
            <person name="Fisk D.G."/>
            <person name="Binkley G."/>
            <person name="Balakrishnan R."/>
            <person name="Costanzo M.C."/>
            <person name="Dwight S.S."/>
            <person name="Hitz B.C."/>
            <person name="Karra K."/>
            <person name="Nash R.S."/>
            <person name="Weng S."/>
            <person name="Wong E.D."/>
            <person name="Lloyd P."/>
            <person name="Skrzypek M.S."/>
            <person name="Miyasato S.R."/>
            <person name="Simison M."/>
            <person name="Cherry J.M."/>
        </authorList>
    </citation>
    <scope>GENOME REANNOTATION</scope>
    <source>
        <strain>ATCC 204508 / S288c</strain>
    </source>
</reference>
<reference key="3">
    <citation type="journal article" date="2003" name="Nature">
        <title>Global analysis of protein expression in yeast.</title>
        <authorList>
            <person name="Ghaemmaghami S."/>
            <person name="Huh W.-K."/>
            <person name="Bower K."/>
            <person name="Howson R.W."/>
            <person name="Belle A."/>
            <person name="Dephoure N."/>
            <person name="O'Shea E.K."/>
            <person name="Weissman J.S."/>
        </authorList>
    </citation>
    <scope>LEVEL OF PROTEIN EXPRESSION [LARGE SCALE ANALYSIS]</scope>
</reference>
<reference key="4">
    <citation type="journal article" date="2004" name="Eukaryot. Cell">
        <title>Gid8p (Dcr1p) and Dcr2p function in a common pathway to promote START completion in Saccharomyces cerevisiae.</title>
        <authorList>
            <person name="Pathak R."/>
            <person name="Bogomolnaya L.M."/>
            <person name="Guo J."/>
            <person name="Polymenis M."/>
        </authorList>
    </citation>
    <scope>FUNCTION</scope>
    <scope>SUBCELLULAR LOCATION</scope>
    <scope>MUTAGENESIS OF HIS-338</scope>
</reference>
<sequence length="578" mass="66463">MIRLPRLYQRYLLYLVVFVVIALFYFLQAPRVEEHIGFDLALPISHVDNLWFQNKGLEGFSNDDKLVVNIGYDECFHIGRFYEGCFNRHELKSTLTDGHQYLQRKRIHKDLRGSFGRRWFGKSEYLYYDVLYPALVDYFGSNLEKLNVEAVTGISKYPKDKSLPFMDVSITFEPISIELLQKRSYISDINILFGVDCIQPIANWTLQKEFPLVKYRYSEPAYLTYKFVGTRPVDTGAQRLQETDEGKFKIVQLADLHLGVGESECIDEYPKHEACKADPKTETFVQQVLDIEKPQLVVFTGDQIMGDRSIQDSETVLLKAVAPVIARKIPWAMVWGNHDDEGSLTRWQLSEIASVLPYSLFKFSPHDTHDNTFGVGNYIYQIFSNNDTEVPVGTLYFLDSHKYSTVGKIYPGYDWIKESQWKYIEDYHDVNLKFKTGLSMAFFHIPLPEYLNIESKTHPGEKNPLIGMYKEGVTAPKYNSEGITTLDRLSVDVVSCGHDHCNDYCLRDDSTPNKIWLCYGGGGGEGGYAGYGGTERRIRIYEINVNENNIHTWKRLNGSPKEIFDFQSMLDGNSPESV</sequence>
<organism>
    <name type="scientific">Saccharomyces cerevisiae (strain ATCC 204508 / S288c)</name>
    <name type="common">Baker's yeast</name>
    <dbReference type="NCBI Taxonomy" id="559292"/>
    <lineage>
        <taxon>Eukaryota</taxon>
        <taxon>Fungi</taxon>
        <taxon>Dikarya</taxon>
        <taxon>Ascomycota</taxon>
        <taxon>Saccharomycotina</taxon>
        <taxon>Saccharomycetes</taxon>
        <taxon>Saccharomycetales</taxon>
        <taxon>Saccharomycetaceae</taxon>
        <taxon>Saccharomyces</taxon>
    </lineage>
</organism>
<feature type="chain" id="PRO_0000079819" description="Phosphatase DCR2">
    <location>
        <begin position="1"/>
        <end position="578"/>
    </location>
</feature>
<feature type="binding site" evidence="1">
    <location>
        <begin position="116"/>
        <end position="123"/>
    </location>
    <ligand>
        <name>ATP</name>
        <dbReference type="ChEBI" id="CHEBI:30616"/>
    </ligand>
</feature>
<feature type="mutagenesis site" description="20% phosphatase activity." evidence="3">
    <original>H</original>
    <variation>A</variation>
    <location>
        <position position="338"/>
    </location>
</feature>
<protein>
    <recommendedName>
        <fullName>Phosphatase DCR2</fullName>
        <ecNumber>3.1.-.-</ecNumber>
    </recommendedName>
    <alternativeName>
        <fullName>Dosage-dependent cell cycle regulator 2</fullName>
    </alternativeName>
</protein>
<gene>
    <name type="primary">DCR2</name>
    <name type="ordered locus">YLR361C</name>
</gene>
<comment type="function">
    <text evidence="3">Required for cell cycle progression. Has a role in the completion of START.</text>
</comment>
<comment type="interaction">
    <interactant intactId="EBI-3669144">
        <id>Q05924</id>
    </interactant>
    <interactant intactId="EBI-9364">
        <id>P32361</id>
        <label>IRE1</label>
    </interactant>
    <organismsDiffer>false</organismsDiffer>
    <experiments>2</experiments>
</comment>
<comment type="subcellular location">
    <subcellularLocation>
        <location evidence="3">Cytoplasm</location>
    </subcellularLocation>
</comment>
<comment type="miscellaneous">
    <text evidence="2">Present with 1940 molecules/cell in log phase SD medium.</text>
</comment>